<accession>P50182</accession>
<dbReference type="EC" id="2.1.1.37"/>
<dbReference type="EMBL" id="U06074">
    <property type="protein sequence ID" value="AAA53237.1"/>
    <property type="molecule type" value="Genomic_DNA"/>
</dbReference>
<dbReference type="PIR" id="S43886">
    <property type="entry name" value="S43886"/>
</dbReference>
<dbReference type="RefSeq" id="WP_003708503.1">
    <property type="nucleotide sequence ID" value="NZ_QQKV01000001.1"/>
</dbReference>
<dbReference type="SMR" id="P50182"/>
<dbReference type="STRING" id="486.B2G52_08325"/>
<dbReference type="REBASE" id="3469">
    <property type="entry name" value="M.NlaIV"/>
</dbReference>
<dbReference type="PRO" id="PR:P50182"/>
<dbReference type="GO" id="GO:0003886">
    <property type="term" value="F:DNA (cytosine-5-)-methyltransferase activity"/>
    <property type="evidence" value="ECO:0007669"/>
    <property type="project" value="UniProtKB-EC"/>
</dbReference>
<dbReference type="GO" id="GO:0003677">
    <property type="term" value="F:DNA binding"/>
    <property type="evidence" value="ECO:0007669"/>
    <property type="project" value="UniProtKB-KW"/>
</dbReference>
<dbReference type="GO" id="GO:0009307">
    <property type="term" value="P:DNA restriction-modification system"/>
    <property type="evidence" value="ECO:0007669"/>
    <property type="project" value="UniProtKB-KW"/>
</dbReference>
<dbReference type="GO" id="GO:0032259">
    <property type="term" value="P:methylation"/>
    <property type="evidence" value="ECO:0007669"/>
    <property type="project" value="UniProtKB-KW"/>
</dbReference>
<dbReference type="CDD" id="cd00315">
    <property type="entry name" value="Cyt_C5_DNA_methylase"/>
    <property type="match status" value="1"/>
</dbReference>
<dbReference type="Gene3D" id="3.90.120.10">
    <property type="entry name" value="DNA Methylase, subunit A, domain 2"/>
    <property type="match status" value="1"/>
</dbReference>
<dbReference type="Gene3D" id="3.40.50.150">
    <property type="entry name" value="Vaccinia Virus protein VP39"/>
    <property type="match status" value="1"/>
</dbReference>
<dbReference type="InterPro" id="IPR050750">
    <property type="entry name" value="C5-MTase"/>
</dbReference>
<dbReference type="InterPro" id="IPR018117">
    <property type="entry name" value="C5_DNA_meth_AS"/>
</dbReference>
<dbReference type="InterPro" id="IPR001525">
    <property type="entry name" value="C5_MeTfrase"/>
</dbReference>
<dbReference type="InterPro" id="IPR029063">
    <property type="entry name" value="SAM-dependent_MTases_sf"/>
</dbReference>
<dbReference type="NCBIfam" id="TIGR00675">
    <property type="entry name" value="dcm"/>
    <property type="match status" value="1"/>
</dbReference>
<dbReference type="PANTHER" id="PTHR46098">
    <property type="entry name" value="TRNA (CYTOSINE(38)-C(5))-METHYLTRANSFERASE"/>
    <property type="match status" value="1"/>
</dbReference>
<dbReference type="PANTHER" id="PTHR46098:SF1">
    <property type="entry name" value="TRNA (CYTOSINE(38)-C(5))-METHYLTRANSFERASE"/>
    <property type="match status" value="1"/>
</dbReference>
<dbReference type="Pfam" id="PF00145">
    <property type="entry name" value="DNA_methylase"/>
    <property type="match status" value="1"/>
</dbReference>
<dbReference type="PRINTS" id="PR00105">
    <property type="entry name" value="C5METTRFRASE"/>
</dbReference>
<dbReference type="SUPFAM" id="SSF53335">
    <property type="entry name" value="S-adenosyl-L-methionine-dependent methyltransferases"/>
    <property type="match status" value="1"/>
</dbReference>
<dbReference type="PROSITE" id="PS00094">
    <property type="entry name" value="C5_MTASE_1"/>
    <property type="match status" value="1"/>
</dbReference>
<dbReference type="PROSITE" id="PS51679">
    <property type="entry name" value="SAM_MT_C5"/>
    <property type="match status" value="1"/>
</dbReference>
<proteinExistence type="inferred from homology"/>
<sequence>MQQIKFIDLFSGMSGIRKGFEQACRKQSVACKCVFTSEIKPAALEVLKQNYPDEVPYGDITKIETGDIPDFDILLAGFPCQAFSFAGKRLGFEDTRGTLFFDVARILKAKKPKGFILENVEGLVTHDRKDPTQKIGRTLTVILETLEALGYYVSWKVLNAKDFGIPQNRKRIYLTGSLKSKPDLSFETTPSPKLKNILESGLPTESSPFIKKLLKKFPPSELYGKSVKDKRGGKNNIHSWDIELKGAVTEEEKQLLNILLKERRKKKWASEIGIDWMDGMPLTKAQISTFYKHPDLQNILDSLTDKGYLVLEHPKQKIGGQRIKDESLPKGYNIVSGKKSFEINKILDPNDVAPTLVAMDMEHLFVVDNGGLRTLTGKEGLRLFGYPDDYSFDIPKKDKYDLLGNTVAVPVIKAVSERLLHTL</sequence>
<protein>
    <recommendedName>
        <fullName evidence="5">Type II methyltransferase M.NlaIV</fullName>
        <shortName evidence="4">M.NlaIV</shortName>
        <ecNumber>2.1.1.37</ecNumber>
    </recommendedName>
    <alternativeName>
        <fullName>Cytosine-specific methyltransferase NlaIV</fullName>
    </alternativeName>
    <alternativeName>
        <fullName>Modification methylase NlaIV</fullName>
    </alternativeName>
</protein>
<organism>
    <name type="scientific">Neisseria lactamica</name>
    <dbReference type="NCBI Taxonomy" id="486"/>
    <lineage>
        <taxon>Bacteria</taxon>
        <taxon>Pseudomonadati</taxon>
        <taxon>Pseudomonadota</taxon>
        <taxon>Betaproteobacteria</taxon>
        <taxon>Neisseriales</taxon>
        <taxon>Neisseriaceae</taxon>
        <taxon>Neisseria</taxon>
    </lineage>
</organism>
<comment type="function">
    <text evidence="3">A methylase that recognizes the double-stranded sequence 5'-GGNNCC-3', methylates C-? on both strands, and protects the DNA from cleavage by the NlaIV endonuclease.</text>
</comment>
<comment type="catalytic activity">
    <reaction evidence="2">
        <text>a 2'-deoxycytidine in DNA + S-adenosyl-L-methionine = a 5-methyl-2'-deoxycytidine in DNA + S-adenosyl-L-homocysteine + H(+)</text>
        <dbReference type="Rhea" id="RHEA:13681"/>
        <dbReference type="Rhea" id="RHEA-COMP:11369"/>
        <dbReference type="Rhea" id="RHEA-COMP:11370"/>
        <dbReference type="ChEBI" id="CHEBI:15378"/>
        <dbReference type="ChEBI" id="CHEBI:57856"/>
        <dbReference type="ChEBI" id="CHEBI:59789"/>
        <dbReference type="ChEBI" id="CHEBI:85452"/>
        <dbReference type="ChEBI" id="CHEBI:85454"/>
        <dbReference type="EC" id="2.1.1.37"/>
    </reaction>
</comment>
<comment type="similarity">
    <text evidence="1">Belongs to the class I-like SAM-binding methyltransferase superfamily. C5-methyltransferase family.</text>
</comment>
<gene>
    <name type="primary">nlaIVM</name>
</gene>
<feature type="chain" id="PRO_0000087901" description="Type II methyltransferase M.NlaIV">
    <location>
        <begin position="1"/>
        <end position="423"/>
    </location>
</feature>
<feature type="domain" description="SAM-dependent MTase C5-type" evidence="1">
    <location>
        <begin position="4"/>
        <end position="423"/>
    </location>
</feature>
<feature type="active site" evidence="1 2">
    <location>
        <position position="80"/>
    </location>
</feature>
<evidence type="ECO:0000255" key="1">
    <source>
        <dbReference type="PROSITE-ProRule" id="PRU01016"/>
    </source>
</evidence>
<evidence type="ECO:0000255" key="2">
    <source>
        <dbReference type="PROSITE-ProRule" id="PRU10018"/>
    </source>
</evidence>
<evidence type="ECO:0000303" key="3">
    <source>
    </source>
</evidence>
<evidence type="ECO:0000303" key="4">
    <source>
    </source>
</evidence>
<evidence type="ECO:0000303" key="5">
    <source ref="2"/>
</evidence>
<reference key="1">
    <citation type="journal article" date="1994" name="Mol. Gen. Genet.">
        <title>The NlaIV restriction and modification genes of Neisseria lactamica are flanked by leucine biosynthesis genes.</title>
        <authorList>
            <person name="Lau P.C.K."/>
            <person name="Forghani F."/>
            <person name="Labbe D."/>
            <person name="Bergeron H."/>
            <person name="Brousseau R."/>
            <person name="Holtke H.J."/>
        </authorList>
    </citation>
    <scope>NUCLEOTIDE SEQUENCE [GENOMIC DNA]</scope>
    <source>
        <strain>ATCC 23970 / DSM 4691 / CCUG 5853 / CIP 72.17 / NCTC 10617 / NCDC A7515</strain>
    </source>
</reference>
<reference key="2">
    <citation type="journal article" date="1994" name="Mol. Gen. Genet.">
        <authorList>
            <person name="Lau P.C.K."/>
            <person name="Forghani F."/>
            <person name="Labbe D."/>
            <person name="Bergeron H."/>
            <person name="Brousseau R."/>
            <person name="Holtke H.J."/>
        </authorList>
    </citation>
    <scope>ERRATUM OF PUBMED:8190068</scope>
</reference>
<reference key="3">
    <citation type="journal article" date="2003" name="Nucleic Acids Res.">
        <title>A nomenclature for restriction enzymes, DNA methyltransferases, homing endonucleases and their genes.</title>
        <authorList>
            <person name="Roberts R.J."/>
            <person name="Belfort M."/>
            <person name="Bestor T."/>
            <person name="Bhagwat A.S."/>
            <person name="Bickle T.A."/>
            <person name="Bitinaite J."/>
            <person name="Blumenthal R.M."/>
            <person name="Degtyarev S.K."/>
            <person name="Dryden D.T."/>
            <person name="Dybvig K."/>
            <person name="Firman K."/>
            <person name="Gromova E.S."/>
            <person name="Gumport R.I."/>
            <person name="Halford S.E."/>
            <person name="Hattman S."/>
            <person name="Heitman J."/>
            <person name="Hornby D.P."/>
            <person name="Janulaitis A."/>
            <person name="Jeltsch A."/>
            <person name="Josephsen J."/>
            <person name="Kiss A."/>
            <person name="Klaenhammer T.R."/>
            <person name="Kobayashi I."/>
            <person name="Kong H."/>
            <person name="Krueger D.H."/>
            <person name="Lacks S."/>
            <person name="Marinus M.G."/>
            <person name="Miyahara M."/>
            <person name="Morgan R.D."/>
            <person name="Murray N.E."/>
            <person name="Nagaraja V."/>
            <person name="Piekarowicz A."/>
            <person name="Pingoud A."/>
            <person name="Raleigh E."/>
            <person name="Rao D.N."/>
            <person name="Reich N."/>
            <person name="Repin V.E."/>
            <person name="Selker E.U."/>
            <person name="Shaw P.C."/>
            <person name="Stein D.C."/>
            <person name="Stoddard B.L."/>
            <person name="Szybalski W."/>
            <person name="Trautner T.A."/>
            <person name="Van Etten J.L."/>
            <person name="Vitor J.M."/>
            <person name="Wilson G.G."/>
            <person name="Xu S.Y."/>
        </authorList>
    </citation>
    <scope>NOMENCLATURE</scope>
</reference>
<name>MTN4_NEILA</name>
<keyword id="KW-0238">DNA-binding</keyword>
<keyword id="KW-0489">Methyltransferase</keyword>
<keyword id="KW-0680">Restriction system</keyword>
<keyword id="KW-0949">S-adenosyl-L-methionine</keyword>
<keyword id="KW-0808">Transferase</keyword>